<dbReference type="EC" id="2.7.2.3" evidence="1"/>
<dbReference type="EMBL" id="CP000527">
    <property type="protein sequence ID" value="ABM27739.1"/>
    <property type="molecule type" value="Genomic_DNA"/>
</dbReference>
<dbReference type="RefSeq" id="WP_011791792.1">
    <property type="nucleotide sequence ID" value="NC_008751.1"/>
</dbReference>
<dbReference type="SMR" id="A1VBC3"/>
<dbReference type="KEGG" id="dvl:Dvul_0716"/>
<dbReference type="HOGENOM" id="CLU_025427_0_2_7"/>
<dbReference type="UniPathway" id="UPA00109">
    <property type="reaction ID" value="UER00185"/>
</dbReference>
<dbReference type="Proteomes" id="UP000009173">
    <property type="component" value="Chromosome"/>
</dbReference>
<dbReference type="GO" id="GO:0005829">
    <property type="term" value="C:cytosol"/>
    <property type="evidence" value="ECO:0007669"/>
    <property type="project" value="TreeGrafter"/>
</dbReference>
<dbReference type="GO" id="GO:0043531">
    <property type="term" value="F:ADP binding"/>
    <property type="evidence" value="ECO:0007669"/>
    <property type="project" value="TreeGrafter"/>
</dbReference>
<dbReference type="GO" id="GO:0005524">
    <property type="term" value="F:ATP binding"/>
    <property type="evidence" value="ECO:0007669"/>
    <property type="project" value="UniProtKB-KW"/>
</dbReference>
<dbReference type="GO" id="GO:0004618">
    <property type="term" value="F:phosphoglycerate kinase activity"/>
    <property type="evidence" value="ECO:0007669"/>
    <property type="project" value="UniProtKB-UniRule"/>
</dbReference>
<dbReference type="GO" id="GO:0006094">
    <property type="term" value="P:gluconeogenesis"/>
    <property type="evidence" value="ECO:0007669"/>
    <property type="project" value="TreeGrafter"/>
</dbReference>
<dbReference type="GO" id="GO:0006096">
    <property type="term" value="P:glycolytic process"/>
    <property type="evidence" value="ECO:0007669"/>
    <property type="project" value="UniProtKB-UniRule"/>
</dbReference>
<dbReference type="FunFam" id="3.40.50.1260:FF:000001">
    <property type="entry name" value="Phosphoglycerate kinase"/>
    <property type="match status" value="1"/>
</dbReference>
<dbReference type="FunFam" id="3.40.50.1260:FF:000002">
    <property type="entry name" value="Phosphoglycerate kinase"/>
    <property type="match status" value="1"/>
</dbReference>
<dbReference type="Gene3D" id="3.40.50.1260">
    <property type="entry name" value="Phosphoglycerate kinase, N-terminal domain"/>
    <property type="match status" value="2"/>
</dbReference>
<dbReference type="HAMAP" id="MF_00145">
    <property type="entry name" value="Phosphoglyc_kinase"/>
    <property type="match status" value="1"/>
</dbReference>
<dbReference type="InterPro" id="IPR001576">
    <property type="entry name" value="Phosphoglycerate_kinase"/>
</dbReference>
<dbReference type="InterPro" id="IPR015911">
    <property type="entry name" value="Phosphoglycerate_kinase_CS"/>
</dbReference>
<dbReference type="InterPro" id="IPR015824">
    <property type="entry name" value="Phosphoglycerate_kinase_N"/>
</dbReference>
<dbReference type="InterPro" id="IPR036043">
    <property type="entry name" value="Phosphoglycerate_kinase_sf"/>
</dbReference>
<dbReference type="PANTHER" id="PTHR11406">
    <property type="entry name" value="PHOSPHOGLYCERATE KINASE"/>
    <property type="match status" value="1"/>
</dbReference>
<dbReference type="PANTHER" id="PTHR11406:SF23">
    <property type="entry name" value="PHOSPHOGLYCERATE KINASE 1, CHLOROPLASTIC-RELATED"/>
    <property type="match status" value="1"/>
</dbReference>
<dbReference type="Pfam" id="PF00162">
    <property type="entry name" value="PGK"/>
    <property type="match status" value="1"/>
</dbReference>
<dbReference type="PIRSF" id="PIRSF000724">
    <property type="entry name" value="Pgk"/>
    <property type="match status" value="1"/>
</dbReference>
<dbReference type="PRINTS" id="PR00477">
    <property type="entry name" value="PHGLYCKINASE"/>
</dbReference>
<dbReference type="SUPFAM" id="SSF53748">
    <property type="entry name" value="Phosphoglycerate kinase"/>
    <property type="match status" value="1"/>
</dbReference>
<dbReference type="PROSITE" id="PS00111">
    <property type="entry name" value="PGLYCERATE_KINASE"/>
    <property type="match status" value="1"/>
</dbReference>
<proteinExistence type="inferred from homology"/>
<organism>
    <name type="scientific">Nitratidesulfovibrio vulgaris (strain DP4)</name>
    <name type="common">Desulfovibrio vulgaris</name>
    <dbReference type="NCBI Taxonomy" id="391774"/>
    <lineage>
        <taxon>Bacteria</taxon>
        <taxon>Pseudomonadati</taxon>
        <taxon>Thermodesulfobacteriota</taxon>
        <taxon>Desulfovibrionia</taxon>
        <taxon>Desulfovibrionales</taxon>
        <taxon>Desulfovibrionaceae</taxon>
        <taxon>Nitratidesulfovibrio</taxon>
    </lineage>
</organism>
<accession>A1VBC3</accession>
<keyword id="KW-0067">ATP-binding</keyword>
<keyword id="KW-0963">Cytoplasm</keyword>
<keyword id="KW-0324">Glycolysis</keyword>
<keyword id="KW-0418">Kinase</keyword>
<keyword id="KW-0547">Nucleotide-binding</keyword>
<keyword id="KW-0808">Transferase</keyword>
<sequence length="393" mass="41363">MAVIKMTDLDLKGKRVLLREDLNVPLKEGRITSDKRIRAALPSIRMAMEAGGRVLIVSHLGRPVEGEFDEAFSLAPVAAHLSRELGRDVRLVKDYIDGVDVAEGDCVLCENVRFLKGEKKNTEELGRRLAALCDIFVMDAFGAAHRAQASTHAVARFAPVACAGPLLAAELDALERALDAPKHPLVGIIGGSKVSTKLTLLDNLSHRVDRLIVGGGIANNFIKAAGYEVGKSLYEPELVEEAARLMAAARAAGGEIPVPLDVVVGPELADGAPATVRKVSEVGPDEMILDIGPATAALYREILLAAGTIVWNGPVGAFEWEQFGAGTRALCEAVADSPAFSIAGGGDTVAAVEKYGVASRVGYISTGGGAFLEFLEGKELPAVAILQERAAQS</sequence>
<comment type="catalytic activity">
    <reaction evidence="1">
        <text>(2R)-3-phosphoglycerate + ATP = (2R)-3-phospho-glyceroyl phosphate + ADP</text>
        <dbReference type="Rhea" id="RHEA:14801"/>
        <dbReference type="ChEBI" id="CHEBI:30616"/>
        <dbReference type="ChEBI" id="CHEBI:57604"/>
        <dbReference type="ChEBI" id="CHEBI:58272"/>
        <dbReference type="ChEBI" id="CHEBI:456216"/>
        <dbReference type="EC" id="2.7.2.3"/>
    </reaction>
</comment>
<comment type="pathway">
    <text evidence="1">Carbohydrate degradation; glycolysis; pyruvate from D-glyceraldehyde 3-phosphate: step 2/5.</text>
</comment>
<comment type="subunit">
    <text evidence="1">Monomer.</text>
</comment>
<comment type="subcellular location">
    <subcellularLocation>
        <location evidence="1">Cytoplasm</location>
    </subcellularLocation>
</comment>
<comment type="similarity">
    <text evidence="1">Belongs to the phosphoglycerate kinase family.</text>
</comment>
<evidence type="ECO:0000255" key="1">
    <source>
        <dbReference type="HAMAP-Rule" id="MF_00145"/>
    </source>
</evidence>
<name>PGK_NITV4</name>
<protein>
    <recommendedName>
        <fullName evidence="1">Phosphoglycerate kinase</fullName>
        <ecNumber evidence="1">2.7.2.3</ecNumber>
    </recommendedName>
</protein>
<gene>
    <name evidence="1" type="primary">pgk</name>
    <name type="ordered locus">Dvul_0716</name>
</gene>
<reference key="1">
    <citation type="journal article" date="2009" name="Environ. Microbiol.">
        <title>Contribution of mobile genetic elements to Desulfovibrio vulgaris genome plasticity.</title>
        <authorList>
            <person name="Walker C.B."/>
            <person name="Stolyar S."/>
            <person name="Chivian D."/>
            <person name="Pinel N."/>
            <person name="Gabster J.A."/>
            <person name="Dehal P.S."/>
            <person name="He Z."/>
            <person name="Yang Z.K."/>
            <person name="Yen H.C."/>
            <person name="Zhou J."/>
            <person name="Wall J.D."/>
            <person name="Hazen T.C."/>
            <person name="Arkin A.P."/>
            <person name="Stahl D.A."/>
        </authorList>
    </citation>
    <scope>NUCLEOTIDE SEQUENCE [LARGE SCALE GENOMIC DNA]</scope>
    <source>
        <strain>DP4</strain>
    </source>
</reference>
<feature type="chain" id="PRO_1000057981" description="Phosphoglycerate kinase">
    <location>
        <begin position="1"/>
        <end position="393"/>
    </location>
</feature>
<feature type="binding site" evidence="1">
    <location>
        <begin position="21"/>
        <end position="23"/>
    </location>
    <ligand>
        <name>substrate</name>
    </ligand>
</feature>
<feature type="binding site" evidence="1">
    <location>
        <position position="36"/>
    </location>
    <ligand>
        <name>substrate</name>
    </ligand>
</feature>
<feature type="binding site" evidence="1">
    <location>
        <begin position="59"/>
        <end position="62"/>
    </location>
    <ligand>
        <name>substrate</name>
    </ligand>
</feature>
<feature type="binding site" evidence="1">
    <location>
        <position position="113"/>
    </location>
    <ligand>
        <name>substrate</name>
    </ligand>
</feature>
<feature type="binding site" evidence="1">
    <location>
        <position position="146"/>
    </location>
    <ligand>
        <name>substrate</name>
    </ligand>
</feature>
<feature type="binding site" evidence="1">
    <location>
        <position position="197"/>
    </location>
    <ligand>
        <name>ATP</name>
        <dbReference type="ChEBI" id="CHEBI:30616"/>
    </ligand>
</feature>
<feature type="binding site" evidence="1">
    <location>
        <position position="319"/>
    </location>
    <ligand>
        <name>ATP</name>
        <dbReference type="ChEBI" id="CHEBI:30616"/>
    </ligand>
</feature>
<feature type="binding site" evidence="1">
    <location>
        <begin position="345"/>
        <end position="348"/>
    </location>
    <ligand>
        <name>ATP</name>
        <dbReference type="ChEBI" id="CHEBI:30616"/>
    </ligand>
</feature>